<reference key="1">
    <citation type="journal article" date="2008" name="Genome Biol.">
        <title>Encapsulated in silica: genome, proteome and physiology of the thermophilic bacterium Anoxybacillus flavithermus WK1.</title>
        <authorList>
            <person name="Saw J.H."/>
            <person name="Mountain B.W."/>
            <person name="Feng L."/>
            <person name="Omelchenko M.V."/>
            <person name="Hou S."/>
            <person name="Saito J.A."/>
            <person name="Stott M.B."/>
            <person name="Li D."/>
            <person name="Zhao G."/>
            <person name="Wu J."/>
            <person name="Galperin M.Y."/>
            <person name="Koonin E.V."/>
            <person name="Makarova K.S."/>
            <person name="Wolf Y.I."/>
            <person name="Rigden D.J."/>
            <person name="Dunfield P.F."/>
            <person name="Wang L."/>
            <person name="Alam M."/>
        </authorList>
    </citation>
    <scope>NUCLEOTIDE SEQUENCE [LARGE SCALE GENOMIC DNA]</scope>
    <source>
        <strain>DSM 21510 / WK1</strain>
    </source>
</reference>
<evidence type="ECO:0000255" key="1">
    <source>
        <dbReference type="HAMAP-Rule" id="MF_00054"/>
    </source>
</evidence>
<accession>B7GJ64</accession>
<gene>
    <name evidence="1" type="primary">fusA</name>
    <name type="ordered locus">Aflv_0102</name>
</gene>
<feature type="chain" id="PRO_1000201430" description="Elongation factor G">
    <location>
        <begin position="1"/>
        <end position="692"/>
    </location>
</feature>
<feature type="domain" description="tr-type G">
    <location>
        <begin position="8"/>
        <end position="282"/>
    </location>
</feature>
<feature type="binding site" evidence="1">
    <location>
        <begin position="17"/>
        <end position="24"/>
    </location>
    <ligand>
        <name>GTP</name>
        <dbReference type="ChEBI" id="CHEBI:37565"/>
    </ligand>
</feature>
<feature type="binding site" evidence="1">
    <location>
        <begin position="81"/>
        <end position="85"/>
    </location>
    <ligand>
        <name>GTP</name>
        <dbReference type="ChEBI" id="CHEBI:37565"/>
    </ligand>
</feature>
<feature type="binding site" evidence="1">
    <location>
        <begin position="135"/>
        <end position="138"/>
    </location>
    <ligand>
        <name>GTP</name>
        <dbReference type="ChEBI" id="CHEBI:37565"/>
    </ligand>
</feature>
<name>EFG_ANOFW</name>
<comment type="function">
    <text evidence="1">Catalyzes the GTP-dependent ribosomal translocation step during translation elongation. During this step, the ribosome changes from the pre-translocational (PRE) to the post-translocational (POST) state as the newly formed A-site-bound peptidyl-tRNA and P-site-bound deacylated tRNA move to the P and E sites, respectively. Catalyzes the coordinated movement of the two tRNA molecules, the mRNA and conformational changes in the ribosome.</text>
</comment>
<comment type="subcellular location">
    <subcellularLocation>
        <location evidence="1">Cytoplasm</location>
    </subcellularLocation>
</comment>
<comment type="similarity">
    <text evidence="1">Belongs to the TRAFAC class translation factor GTPase superfamily. Classic translation factor GTPase family. EF-G/EF-2 subfamily.</text>
</comment>
<sequence length="692" mass="77142">MARQFSLENTRNIGIMAHIDAGKTTTTERILFYTGRVHKIGEVHEGAATMDWMEQEQERGITITSAATTAQWKGHRINIIDTPGHVDFTVEVERSLRVLDGAVAVLDAQSGVEPQTETVWRQATTYGVPRIVFVNKMDKIGADFLYSVKTLHERLQANAHPVQLPIGAEDQFTGIIDLVEMCAYHYHDELGKNIERIEIPEDYRDMAEEYRGKLIEAVAELDEELMMKYLEGEEITKEELKAAIRKATVSVQFFPVFCGSAFKNKGVQLMLDGVVDYLPSPVDIPAIKGTVPDTEEETVREARDDAPFAALAFKIMTDPYVGKLTFFRVYSGTLNSGSYVLNSTKRKRERIGRILQMHANHREEIAQVYAGDIAAAVGLKDTTTGDTLCDDKDPVILESMQFPEPVIQIAIEPKSKADQDKMSTALQKLQEEDPTFRAWTDQETGQTIIAGMGELHLDIIVDRMRREFKVEANVGAPQVAYRETFRKSAQVEGKFVRQSGGRGQYGHVWIEFSPNEEGKGFEFENAIVGGVVPREYIPAIQAGLEDAMQNGVLAGYPVVDIKAKLFDGSYHDVDSSEMAFKIAASMALKNAAAKCDPVLLEPIMKVEVIVPEEYLGDIMGDITSRRGRVEGMEARGNAQVVRAMVPLSEMFGYATSLRSNTQGRGTFTMVFDHYEEVPKSIAEEIIKKNKGE</sequence>
<protein>
    <recommendedName>
        <fullName evidence="1">Elongation factor G</fullName>
        <shortName evidence="1">EF-G</shortName>
    </recommendedName>
</protein>
<keyword id="KW-0963">Cytoplasm</keyword>
<keyword id="KW-0251">Elongation factor</keyword>
<keyword id="KW-0342">GTP-binding</keyword>
<keyword id="KW-0547">Nucleotide-binding</keyword>
<keyword id="KW-0648">Protein biosynthesis</keyword>
<organism>
    <name type="scientific">Anoxybacillus flavithermus (strain DSM 21510 / WK1)</name>
    <dbReference type="NCBI Taxonomy" id="491915"/>
    <lineage>
        <taxon>Bacteria</taxon>
        <taxon>Bacillati</taxon>
        <taxon>Bacillota</taxon>
        <taxon>Bacilli</taxon>
        <taxon>Bacillales</taxon>
        <taxon>Anoxybacillaceae</taxon>
        <taxon>Anoxybacillus</taxon>
    </lineage>
</organism>
<dbReference type="EMBL" id="CP000922">
    <property type="protein sequence ID" value="ACJ32486.1"/>
    <property type="molecule type" value="Genomic_DNA"/>
</dbReference>
<dbReference type="RefSeq" id="WP_012573856.1">
    <property type="nucleotide sequence ID" value="NC_011567.1"/>
</dbReference>
<dbReference type="SMR" id="B7GJ64"/>
<dbReference type="STRING" id="491915.Aflv_0102"/>
<dbReference type="GeneID" id="7036301"/>
<dbReference type="KEGG" id="afl:Aflv_0102"/>
<dbReference type="PATRIC" id="fig|491915.6.peg.102"/>
<dbReference type="eggNOG" id="COG0480">
    <property type="taxonomic scope" value="Bacteria"/>
</dbReference>
<dbReference type="HOGENOM" id="CLU_002794_4_1_9"/>
<dbReference type="Proteomes" id="UP000000742">
    <property type="component" value="Chromosome"/>
</dbReference>
<dbReference type="GO" id="GO:0005737">
    <property type="term" value="C:cytoplasm"/>
    <property type="evidence" value="ECO:0007669"/>
    <property type="project" value="UniProtKB-SubCell"/>
</dbReference>
<dbReference type="GO" id="GO:0005525">
    <property type="term" value="F:GTP binding"/>
    <property type="evidence" value="ECO:0007669"/>
    <property type="project" value="UniProtKB-UniRule"/>
</dbReference>
<dbReference type="GO" id="GO:0003924">
    <property type="term" value="F:GTPase activity"/>
    <property type="evidence" value="ECO:0007669"/>
    <property type="project" value="InterPro"/>
</dbReference>
<dbReference type="GO" id="GO:0003746">
    <property type="term" value="F:translation elongation factor activity"/>
    <property type="evidence" value="ECO:0007669"/>
    <property type="project" value="UniProtKB-UniRule"/>
</dbReference>
<dbReference type="GO" id="GO:0032790">
    <property type="term" value="P:ribosome disassembly"/>
    <property type="evidence" value="ECO:0007669"/>
    <property type="project" value="TreeGrafter"/>
</dbReference>
<dbReference type="CDD" id="cd01886">
    <property type="entry name" value="EF-G"/>
    <property type="match status" value="1"/>
</dbReference>
<dbReference type="CDD" id="cd16262">
    <property type="entry name" value="EFG_III"/>
    <property type="match status" value="1"/>
</dbReference>
<dbReference type="CDD" id="cd01434">
    <property type="entry name" value="EFG_mtEFG1_IV"/>
    <property type="match status" value="1"/>
</dbReference>
<dbReference type="CDD" id="cd03713">
    <property type="entry name" value="EFG_mtEFG_C"/>
    <property type="match status" value="1"/>
</dbReference>
<dbReference type="CDD" id="cd04088">
    <property type="entry name" value="EFG_mtEFG_II"/>
    <property type="match status" value="1"/>
</dbReference>
<dbReference type="FunFam" id="2.40.30.10:FF:000006">
    <property type="entry name" value="Elongation factor G"/>
    <property type="match status" value="1"/>
</dbReference>
<dbReference type="FunFam" id="3.30.230.10:FF:000003">
    <property type="entry name" value="Elongation factor G"/>
    <property type="match status" value="1"/>
</dbReference>
<dbReference type="FunFam" id="3.30.70.240:FF:000001">
    <property type="entry name" value="Elongation factor G"/>
    <property type="match status" value="1"/>
</dbReference>
<dbReference type="FunFam" id="3.30.70.870:FF:000001">
    <property type="entry name" value="Elongation factor G"/>
    <property type="match status" value="1"/>
</dbReference>
<dbReference type="FunFam" id="3.40.50.300:FF:000029">
    <property type="entry name" value="Elongation factor G"/>
    <property type="match status" value="1"/>
</dbReference>
<dbReference type="Gene3D" id="3.30.230.10">
    <property type="match status" value="1"/>
</dbReference>
<dbReference type="Gene3D" id="3.30.70.240">
    <property type="match status" value="1"/>
</dbReference>
<dbReference type="Gene3D" id="3.30.70.870">
    <property type="entry name" value="Elongation Factor G (Translational Gtpase), domain 3"/>
    <property type="match status" value="1"/>
</dbReference>
<dbReference type="Gene3D" id="3.40.50.300">
    <property type="entry name" value="P-loop containing nucleotide triphosphate hydrolases"/>
    <property type="match status" value="1"/>
</dbReference>
<dbReference type="Gene3D" id="2.40.30.10">
    <property type="entry name" value="Translation factors"/>
    <property type="match status" value="1"/>
</dbReference>
<dbReference type="HAMAP" id="MF_00054_B">
    <property type="entry name" value="EF_G_EF_2_B"/>
    <property type="match status" value="1"/>
</dbReference>
<dbReference type="InterPro" id="IPR041095">
    <property type="entry name" value="EFG_II"/>
</dbReference>
<dbReference type="InterPro" id="IPR009022">
    <property type="entry name" value="EFG_III"/>
</dbReference>
<dbReference type="InterPro" id="IPR035647">
    <property type="entry name" value="EFG_III/V"/>
</dbReference>
<dbReference type="InterPro" id="IPR047872">
    <property type="entry name" value="EFG_IV"/>
</dbReference>
<dbReference type="InterPro" id="IPR035649">
    <property type="entry name" value="EFG_V"/>
</dbReference>
<dbReference type="InterPro" id="IPR000640">
    <property type="entry name" value="EFG_V-like"/>
</dbReference>
<dbReference type="InterPro" id="IPR004161">
    <property type="entry name" value="EFTu-like_2"/>
</dbReference>
<dbReference type="InterPro" id="IPR031157">
    <property type="entry name" value="G_TR_CS"/>
</dbReference>
<dbReference type="InterPro" id="IPR027417">
    <property type="entry name" value="P-loop_NTPase"/>
</dbReference>
<dbReference type="InterPro" id="IPR020568">
    <property type="entry name" value="Ribosomal_Su5_D2-typ_SF"/>
</dbReference>
<dbReference type="InterPro" id="IPR014721">
    <property type="entry name" value="Ribsml_uS5_D2-typ_fold_subgr"/>
</dbReference>
<dbReference type="InterPro" id="IPR005225">
    <property type="entry name" value="Small_GTP-bd"/>
</dbReference>
<dbReference type="InterPro" id="IPR000795">
    <property type="entry name" value="T_Tr_GTP-bd_dom"/>
</dbReference>
<dbReference type="InterPro" id="IPR009000">
    <property type="entry name" value="Transl_B-barrel_sf"/>
</dbReference>
<dbReference type="InterPro" id="IPR004540">
    <property type="entry name" value="Transl_elong_EFG/EF2"/>
</dbReference>
<dbReference type="InterPro" id="IPR005517">
    <property type="entry name" value="Transl_elong_EFG/EF2_IV"/>
</dbReference>
<dbReference type="NCBIfam" id="TIGR00484">
    <property type="entry name" value="EF-G"/>
    <property type="match status" value="1"/>
</dbReference>
<dbReference type="NCBIfam" id="NF009379">
    <property type="entry name" value="PRK12740.1-3"/>
    <property type="match status" value="1"/>
</dbReference>
<dbReference type="NCBIfam" id="NF009381">
    <property type="entry name" value="PRK12740.1-5"/>
    <property type="match status" value="1"/>
</dbReference>
<dbReference type="NCBIfam" id="NF009891">
    <property type="entry name" value="PRK13351.1-1"/>
    <property type="match status" value="1"/>
</dbReference>
<dbReference type="NCBIfam" id="TIGR00231">
    <property type="entry name" value="small_GTP"/>
    <property type="match status" value="1"/>
</dbReference>
<dbReference type="PANTHER" id="PTHR43261:SF1">
    <property type="entry name" value="RIBOSOME-RELEASING FACTOR 2, MITOCHONDRIAL"/>
    <property type="match status" value="1"/>
</dbReference>
<dbReference type="PANTHER" id="PTHR43261">
    <property type="entry name" value="TRANSLATION ELONGATION FACTOR G-RELATED"/>
    <property type="match status" value="1"/>
</dbReference>
<dbReference type="Pfam" id="PF00679">
    <property type="entry name" value="EFG_C"/>
    <property type="match status" value="1"/>
</dbReference>
<dbReference type="Pfam" id="PF14492">
    <property type="entry name" value="EFG_III"/>
    <property type="match status" value="1"/>
</dbReference>
<dbReference type="Pfam" id="PF03764">
    <property type="entry name" value="EFG_IV"/>
    <property type="match status" value="1"/>
</dbReference>
<dbReference type="Pfam" id="PF00009">
    <property type="entry name" value="GTP_EFTU"/>
    <property type="match status" value="1"/>
</dbReference>
<dbReference type="Pfam" id="PF03144">
    <property type="entry name" value="GTP_EFTU_D2"/>
    <property type="match status" value="1"/>
</dbReference>
<dbReference type="PRINTS" id="PR00315">
    <property type="entry name" value="ELONGATNFCT"/>
</dbReference>
<dbReference type="SMART" id="SM00838">
    <property type="entry name" value="EFG_C"/>
    <property type="match status" value="1"/>
</dbReference>
<dbReference type="SMART" id="SM00889">
    <property type="entry name" value="EFG_IV"/>
    <property type="match status" value="1"/>
</dbReference>
<dbReference type="SUPFAM" id="SSF54980">
    <property type="entry name" value="EF-G C-terminal domain-like"/>
    <property type="match status" value="2"/>
</dbReference>
<dbReference type="SUPFAM" id="SSF52540">
    <property type="entry name" value="P-loop containing nucleoside triphosphate hydrolases"/>
    <property type="match status" value="1"/>
</dbReference>
<dbReference type="SUPFAM" id="SSF54211">
    <property type="entry name" value="Ribosomal protein S5 domain 2-like"/>
    <property type="match status" value="1"/>
</dbReference>
<dbReference type="SUPFAM" id="SSF50447">
    <property type="entry name" value="Translation proteins"/>
    <property type="match status" value="1"/>
</dbReference>
<dbReference type="PROSITE" id="PS00301">
    <property type="entry name" value="G_TR_1"/>
    <property type="match status" value="1"/>
</dbReference>
<dbReference type="PROSITE" id="PS51722">
    <property type="entry name" value="G_TR_2"/>
    <property type="match status" value="1"/>
</dbReference>
<proteinExistence type="inferred from homology"/>